<comment type="function">
    <text evidence="1">Catalyzes the phosphorylation of the 3'-hydroxyl group of dephosphocoenzyme A to form coenzyme A.</text>
</comment>
<comment type="catalytic activity">
    <reaction evidence="1">
        <text>3'-dephospho-CoA + ATP = ADP + CoA + H(+)</text>
        <dbReference type="Rhea" id="RHEA:18245"/>
        <dbReference type="ChEBI" id="CHEBI:15378"/>
        <dbReference type="ChEBI" id="CHEBI:30616"/>
        <dbReference type="ChEBI" id="CHEBI:57287"/>
        <dbReference type="ChEBI" id="CHEBI:57328"/>
        <dbReference type="ChEBI" id="CHEBI:456216"/>
        <dbReference type="EC" id="2.7.1.24"/>
    </reaction>
</comment>
<comment type="pathway">
    <text evidence="1">Cofactor biosynthesis; coenzyme A biosynthesis; CoA from (R)-pantothenate: step 5/5.</text>
</comment>
<comment type="subcellular location">
    <subcellularLocation>
        <location evidence="1">Cytoplasm</location>
    </subcellularLocation>
</comment>
<comment type="similarity">
    <text evidence="1">Belongs to the CoaE family.</text>
</comment>
<proteinExistence type="inferred from homology"/>
<reference key="1">
    <citation type="submission" date="2005-10" db="EMBL/GenBank/DDBJ databases">
        <title>Complete sequence of Pelobacter carbinolicus DSM 2380.</title>
        <authorList>
            <person name="Copeland A."/>
            <person name="Lucas S."/>
            <person name="Lapidus A."/>
            <person name="Barry K."/>
            <person name="Detter J.C."/>
            <person name="Glavina T."/>
            <person name="Hammon N."/>
            <person name="Israni S."/>
            <person name="Pitluck S."/>
            <person name="Chertkov O."/>
            <person name="Schmutz J."/>
            <person name="Larimer F."/>
            <person name="Land M."/>
            <person name="Kyrpides N."/>
            <person name="Ivanova N."/>
            <person name="Richardson P."/>
        </authorList>
    </citation>
    <scope>NUCLEOTIDE SEQUENCE [LARGE SCALE GENOMIC DNA]</scope>
    <source>
        <strain>DSM 2380 / NBRC 103641 / GraBd1</strain>
    </source>
</reference>
<keyword id="KW-0067">ATP-binding</keyword>
<keyword id="KW-0173">Coenzyme A biosynthesis</keyword>
<keyword id="KW-0963">Cytoplasm</keyword>
<keyword id="KW-0418">Kinase</keyword>
<keyword id="KW-0547">Nucleotide-binding</keyword>
<keyword id="KW-1185">Reference proteome</keyword>
<keyword id="KW-0808">Transferase</keyword>
<name>COAE_SYNC1</name>
<protein>
    <recommendedName>
        <fullName evidence="1">Dephospho-CoA kinase</fullName>
        <ecNumber evidence="1">2.7.1.24</ecNumber>
    </recommendedName>
    <alternativeName>
        <fullName evidence="1">Dephosphocoenzyme A kinase</fullName>
    </alternativeName>
</protein>
<feature type="chain" id="PRO_0000243313" description="Dephospho-CoA kinase">
    <location>
        <begin position="1"/>
        <end position="211"/>
    </location>
</feature>
<feature type="domain" description="DPCK" evidence="1">
    <location>
        <begin position="3"/>
        <end position="206"/>
    </location>
</feature>
<feature type="binding site" evidence="1">
    <location>
        <begin position="11"/>
        <end position="16"/>
    </location>
    <ligand>
        <name>ATP</name>
        <dbReference type="ChEBI" id="CHEBI:30616"/>
    </ligand>
</feature>
<evidence type="ECO:0000255" key="1">
    <source>
        <dbReference type="HAMAP-Rule" id="MF_00376"/>
    </source>
</evidence>
<gene>
    <name evidence="1" type="primary">coaE</name>
    <name type="ordered locus">Pcar_0757</name>
</gene>
<accession>Q3A6J1</accession>
<organism>
    <name type="scientific">Syntrophotalea carbinolica (strain DSM 2380 / NBRC 103641 / GraBd1)</name>
    <name type="common">Pelobacter carbinolicus</name>
    <dbReference type="NCBI Taxonomy" id="338963"/>
    <lineage>
        <taxon>Bacteria</taxon>
        <taxon>Pseudomonadati</taxon>
        <taxon>Thermodesulfobacteriota</taxon>
        <taxon>Desulfuromonadia</taxon>
        <taxon>Desulfuromonadales</taxon>
        <taxon>Syntrophotaleaceae</taxon>
        <taxon>Syntrophotalea</taxon>
    </lineage>
</organism>
<dbReference type="EC" id="2.7.1.24" evidence="1"/>
<dbReference type="EMBL" id="CP000142">
    <property type="protein sequence ID" value="ABA88016.1"/>
    <property type="molecule type" value="Genomic_DNA"/>
</dbReference>
<dbReference type="RefSeq" id="WP_011340460.1">
    <property type="nucleotide sequence ID" value="NC_007498.2"/>
</dbReference>
<dbReference type="SMR" id="Q3A6J1"/>
<dbReference type="STRING" id="338963.Pcar_0757"/>
<dbReference type="KEGG" id="pca:Pcar_0757"/>
<dbReference type="eggNOG" id="COG0237">
    <property type="taxonomic scope" value="Bacteria"/>
</dbReference>
<dbReference type="HOGENOM" id="CLU_057180_2_1_7"/>
<dbReference type="OrthoDB" id="9812943at2"/>
<dbReference type="UniPathway" id="UPA00241">
    <property type="reaction ID" value="UER00356"/>
</dbReference>
<dbReference type="Proteomes" id="UP000002534">
    <property type="component" value="Chromosome"/>
</dbReference>
<dbReference type="GO" id="GO:0005737">
    <property type="term" value="C:cytoplasm"/>
    <property type="evidence" value="ECO:0007669"/>
    <property type="project" value="UniProtKB-SubCell"/>
</dbReference>
<dbReference type="GO" id="GO:0005524">
    <property type="term" value="F:ATP binding"/>
    <property type="evidence" value="ECO:0007669"/>
    <property type="project" value="UniProtKB-UniRule"/>
</dbReference>
<dbReference type="GO" id="GO:0004140">
    <property type="term" value="F:dephospho-CoA kinase activity"/>
    <property type="evidence" value="ECO:0007669"/>
    <property type="project" value="UniProtKB-UniRule"/>
</dbReference>
<dbReference type="GO" id="GO:0015937">
    <property type="term" value="P:coenzyme A biosynthetic process"/>
    <property type="evidence" value="ECO:0007669"/>
    <property type="project" value="UniProtKB-UniRule"/>
</dbReference>
<dbReference type="CDD" id="cd02022">
    <property type="entry name" value="DPCK"/>
    <property type="match status" value="1"/>
</dbReference>
<dbReference type="FunFam" id="3.40.50.300:FF:000991">
    <property type="entry name" value="Dephospho-CoA kinase"/>
    <property type="match status" value="1"/>
</dbReference>
<dbReference type="Gene3D" id="3.40.50.300">
    <property type="entry name" value="P-loop containing nucleotide triphosphate hydrolases"/>
    <property type="match status" value="1"/>
</dbReference>
<dbReference type="HAMAP" id="MF_00376">
    <property type="entry name" value="Dephospho_CoA_kinase"/>
    <property type="match status" value="1"/>
</dbReference>
<dbReference type="InterPro" id="IPR001977">
    <property type="entry name" value="Depp_CoAkinase"/>
</dbReference>
<dbReference type="InterPro" id="IPR027417">
    <property type="entry name" value="P-loop_NTPase"/>
</dbReference>
<dbReference type="NCBIfam" id="TIGR00152">
    <property type="entry name" value="dephospho-CoA kinase"/>
    <property type="match status" value="1"/>
</dbReference>
<dbReference type="PANTHER" id="PTHR10695:SF46">
    <property type="entry name" value="BIFUNCTIONAL COENZYME A SYNTHASE-RELATED"/>
    <property type="match status" value="1"/>
</dbReference>
<dbReference type="PANTHER" id="PTHR10695">
    <property type="entry name" value="DEPHOSPHO-COA KINASE-RELATED"/>
    <property type="match status" value="1"/>
</dbReference>
<dbReference type="Pfam" id="PF01121">
    <property type="entry name" value="CoaE"/>
    <property type="match status" value="1"/>
</dbReference>
<dbReference type="SUPFAM" id="SSF52540">
    <property type="entry name" value="P-loop containing nucleoside triphosphate hydrolases"/>
    <property type="match status" value="1"/>
</dbReference>
<dbReference type="PROSITE" id="PS51219">
    <property type="entry name" value="DPCK"/>
    <property type="match status" value="1"/>
</dbReference>
<sequence>MLVLGLTGGIGSGKSIVAEMFRTLGAKVVSADDLARMIVQPGSPTLARIARRFGAEVLCEGGALNRAWLAKKIFSDPQARLDLDRITHPAIAELARRRFAALAQASATLVVYDAPLLFEAGADTQVDAVVVVSVAEEVQLQRLMLRDGLDEQAARSRMDSQMPLDEKLARADYVIDNNGSLEQTRDQVVALMARLVPGMKGPDPHASGSAG</sequence>